<accession>Q8NAC3</accession>
<accession>A8BWC1</accession>
<accession>A8BWC9</accession>
<accession>A8BWD5</accession>
<accession>E9PHG1</accession>
<accession>E9PHJ6</accession>
<accession>Q6UVY3</accession>
<accession>Q6UWD4</accession>
<accession>Q8NFS1</accession>
<accession>Q9BR97</accession>
<evidence type="ECO:0000250" key="1">
    <source>
        <dbReference type="UniProtKB" id="Q8K4C2"/>
    </source>
</evidence>
<evidence type="ECO:0000255" key="2"/>
<evidence type="ECO:0000255" key="3">
    <source>
        <dbReference type="PROSITE-ProRule" id="PRU00867"/>
    </source>
</evidence>
<evidence type="ECO:0000256" key="4">
    <source>
        <dbReference type="SAM" id="MobiDB-lite"/>
    </source>
</evidence>
<evidence type="ECO:0000269" key="5">
    <source>
    </source>
</evidence>
<evidence type="ECO:0000269" key="6">
    <source>
    </source>
</evidence>
<evidence type="ECO:0000269" key="7">
    <source>
    </source>
</evidence>
<evidence type="ECO:0000269" key="8">
    <source>
    </source>
</evidence>
<evidence type="ECO:0000269" key="9">
    <source>
    </source>
</evidence>
<evidence type="ECO:0000269" key="10">
    <source>
    </source>
</evidence>
<evidence type="ECO:0000269" key="11">
    <source>
    </source>
</evidence>
<evidence type="ECO:0000269" key="12">
    <source>
    </source>
</evidence>
<evidence type="ECO:0000269" key="13">
    <source>
    </source>
</evidence>
<evidence type="ECO:0000269" key="14">
    <source>
    </source>
</evidence>
<evidence type="ECO:0000269" key="15">
    <source>
    </source>
</evidence>
<evidence type="ECO:0000303" key="16">
    <source>
    </source>
</evidence>
<evidence type="ECO:0000303" key="17">
    <source>
    </source>
</evidence>
<evidence type="ECO:0000303" key="18">
    <source>
    </source>
</evidence>
<evidence type="ECO:0000305" key="19"/>
<evidence type="ECO:0007744" key="20">
    <source>
        <dbReference type="PDB" id="6HG4"/>
    </source>
</evidence>
<evidence type="ECO:0007829" key="21">
    <source>
        <dbReference type="PDB" id="6HG4"/>
    </source>
</evidence>
<evidence type="ECO:0007829" key="22">
    <source>
        <dbReference type="PDB" id="6HGA"/>
    </source>
</evidence>
<evidence type="ECO:0007829" key="23">
    <source>
        <dbReference type="PDB" id="7UWN"/>
    </source>
</evidence>
<keyword id="KW-0002">3D-structure</keyword>
<keyword id="KW-0025">Alternative splicing</keyword>
<keyword id="KW-1003">Cell membrane</keyword>
<keyword id="KW-0903">Direct protein sequencing</keyword>
<keyword id="KW-1015">Disulfide bond</keyword>
<keyword id="KW-0325">Glycoprotein</keyword>
<keyword id="KW-0395">Inflammatory response</keyword>
<keyword id="KW-0472">Membrane</keyword>
<keyword id="KW-1267">Proteomics identification</keyword>
<keyword id="KW-0675">Receptor</keyword>
<keyword id="KW-1185">Reference proteome</keyword>
<keyword id="KW-0732">Signal</keyword>
<keyword id="KW-0812">Transmembrane</keyword>
<keyword id="KW-1133">Transmembrane helix</keyword>
<gene>
    <name type="primary">IL17RC</name>
    <name type="ORF">UNQ6118/PRO20040/PRO38901</name>
</gene>
<comment type="function">
    <text evidence="1 9 10 11 15">Receptor for IL17A and IL17F, major effector cytokines of innate and adaptive immune system involved in antimicrobial host defense and maintenance of tissue integrity (By similarity). Receptor for IL17A and IL17F, major effector cytokines of innate and adaptive immune system involved in antimicrobial host defense and maintenance of tissue integrity. Receptor for IL17A and IL17F homodimers as part of a heterodimeric complex with IL17RA (PubMed:16785495). Receptor for the heterodimer formed by IL17A and IL17B as part of a heterodimeric complex with IL17RA (PubMed:18684971). Has also been shown to be the cognate receptor for IL17F and to bind IL17A with high affinity without the need for IL17RA (PubMed:17911633). Upon binding of IL17F homodimer triggers downstream activation of TRAF6 and NF-kappa-B signaling pathway (PubMed:16785495, PubMed:32187518). Induces transcriptional activation of IL33, a potent cytokine that stimulates group 2 innate lymphoid cells and adaptive T-helper 2 cells involved in pulmonary allergic response to fungi (By similarity). Promotes sympathetic innervation of peripheral organs by coordinating the communication between gamma-delta T cells and parenchymal cells. Stimulates sympathetic innervation of thermogenic adipose tissue by driving TGFB1 expression (By similarity). Binding of IL17A-IL17F to IL17RA-IL17RC heterodimeric receptor complex triggers homotypic interaction of IL17RA and IL17RC chains with TRAF3IP2 adapter through SEFIR domains. This leads to downstream TRAF6-mediated activation of NF-kappa-B and MAPkinase pathways ultimately resulting in transcriptional activation of cytokines, chemokines, antimicrobial peptides and matrix metalloproteinases, with potential strong immune inflammation (PubMed:17911633, PubMed:18684971). Primarily induces neutrophil activation and recruitment at infection and inflammatory sites (By similarity). Stimulates the production of antimicrobial beta-defensins DEFB1, DEFB103A, and DEFB104A by mucosal epithelial cells, limiting the entry of microbes through the epithelial barriers (By similarity).</text>
</comment>
<comment type="function">
    <molecule>Isoform 5</molecule>
    <text evidence="9">Receptor for both IL17A and IL17F.</text>
</comment>
<comment type="function">
    <molecule>Isoform 6</molecule>
    <text evidence="9">Does not bind IL17A or IL17F.</text>
</comment>
<comment type="function">
    <molecule>Isoform 7</molecule>
    <text evidence="9">Does not bind IL17A or IL17F.</text>
</comment>
<comment type="function">
    <molecule>Isoform 8</molecule>
    <text evidence="9">Receptor for both IL17A and IL17F.</text>
</comment>
<comment type="subunit">
    <text evidence="1 9 11 12 14 15">Homodimer; disulfide-linked (PubMed:32187518). Heterodimer with IL17RA (PubMed:16785495, PubMed:18684971). Heterodimerization with IL17RA is independent of the cytoplasmic tail (By similarity). Associates with non-glycosylated IL17RA constitutively (By similarity). Binding of IL17A and IL17F induces association with glycosylated IL17RA (By similarity). Forms complexes with 2:1 binding stoichiometry: two receptor chains for one interleukin molecule (PubMed:28827714, PubMed:32187518). IL17A homodimer preferentially drives the formation of IL17RA-IL17RC heterodimeric receptor complex, whereas IL17F homodimer forms predominantly complexes with IL17RC homodimer (PubMed:32187518). IL17A-IL17F forms complexes with IL17RA-IL17RC, but with lower affinity when compared to IL17A homodimer (PubMed:32187518). IL17RC chain cannot distinguish between IL17A and IL17F molecules, potentially enabling the formation of topologically distinct complexes (PubMed:28827714). Interacts (through SEFIR domain and extended downstream region) with TRAF3IP2/ACT1 (phosphorylated) (PubMed:24120361).</text>
</comment>
<comment type="subcellular location">
    <subcellularLocation>
        <location evidence="10">Cell membrane</location>
        <topology evidence="2">Single-pass type I membrane protein</topology>
    </subcellularLocation>
    <text>Soluble isoforms may be produced.</text>
</comment>
<comment type="alternative products">
    <event type="alternative splicing"/>
    <isoform>
        <id>Q8NAC3-1</id>
        <name>1</name>
        <sequence type="displayed"/>
    </isoform>
    <isoform>
        <id>Q8NAC3-2</id>
        <name>2</name>
        <sequence type="described" ref="VSP_014138"/>
    </isoform>
    <isoform>
        <id>Q8NAC3-3</id>
        <name>3</name>
        <sequence type="described" ref="VSP_014138 VSP_014139"/>
    </isoform>
    <isoform>
        <id>Q8NAC3-4</id>
        <name>4</name>
        <sequence type="described" ref="VSP_014138 VSP_014139 VSP_014140 VSP_014141"/>
    </isoform>
    <isoform>
        <id>Q8NAC3-5</id>
        <name>5</name>
        <name evidence="18">IL17RC</name>
        <sequence type="described" ref="VSP_014138 VSP_047292"/>
    </isoform>
    <isoform>
        <id>Q8NAC3-6</id>
        <name>6</name>
        <name evidence="18">IL17RC-delta7,12</name>
        <sequence type="described" ref="VSP_014138 VSP_014139 VSP_047291"/>
    </isoform>
    <isoform>
        <id>Q8NAC3-7</id>
        <name>7</name>
        <name evidence="18">IL17RC-delta12</name>
        <sequence type="described" ref="VSP_014138 VSP_047291 VSP_047292"/>
    </isoform>
    <isoform>
        <id>Q8NAC3-8</id>
        <name>8</name>
        <name evidence="18">IL17RC-delta7</name>
        <sequence type="described" ref="VSP_014138 VSP_014139 VSP_047292"/>
    </isoform>
    <text>Additional isoforms seem to exist.</text>
</comment>
<comment type="tissue specificity">
    <text evidence="5 10">Expressed in prostate, skeletal muscle, kidney and placenta (at protein level) (PubMed:11706037). Expressed in brain, cartilage, colon, heart, intestine, kidney, liver, lung, muscle, placenta, and prostate (PubMed:11706037). Also detected in thyroid, trachea and adrenal gland (PubMed:17911633). Low expression in thymus and leukocytes (PubMed:11706037).</text>
</comment>
<comment type="induction">
    <text evidence="6">By HGF and VEGF.</text>
</comment>
<comment type="disease" evidence="13">
    <disease id="DI-04473">
        <name>Candidiasis, familial, 9</name>
        <acronym>CANDF9</acronym>
        <description>A disorder characterized by altered immune responses and impaired clearance of fungal infections, selective against Candida. It is characterized by persistent and/or recurrent infections of the skin, nails and mucous membranes caused by organisms of the genus Candida, mainly Candida albicans.</description>
        <dbReference type="MIM" id="616445"/>
    </disease>
    <text>The disease is caused by variants affecting the gene represented in this entry.</text>
</comment>
<dbReference type="EMBL" id="EF676032">
    <property type="protein sequence ID" value="ABV44615.1"/>
    <property type="molecule type" value="mRNA"/>
</dbReference>
<dbReference type="EMBL" id="EF676033">
    <property type="protein sequence ID" value="ABV44616.1"/>
    <property type="molecule type" value="mRNA"/>
</dbReference>
<dbReference type="EMBL" id="EF676034">
    <property type="protein sequence ID" value="ABV44617.1"/>
    <property type="molecule type" value="mRNA"/>
</dbReference>
<dbReference type="EMBL" id="BD292072">
    <property type="status" value="NOT_ANNOTATED_CDS"/>
    <property type="molecule type" value="mRNA"/>
</dbReference>
<dbReference type="EMBL" id="AF458065">
    <property type="protein sequence ID" value="AAM77569.1"/>
    <property type="molecule type" value="mRNA"/>
</dbReference>
<dbReference type="EMBL" id="AY358840">
    <property type="protein sequence ID" value="AAQ89199.1"/>
    <property type="molecule type" value="mRNA"/>
</dbReference>
<dbReference type="EMBL" id="AY359098">
    <property type="protein sequence ID" value="AAQ89456.1"/>
    <property type="molecule type" value="mRNA"/>
</dbReference>
<dbReference type="EMBL" id="AK092907">
    <property type="protein sequence ID" value="BAC04001.1"/>
    <property type="molecule type" value="mRNA"/>
</dbReference>
<dbReference type="EMBL" id="AC018809">
    <property type="status" value="NOT_ANNOTATED_CDS"/>
    <property type="molecule type" value="Genomic_DNA"/>
</dbReference>
<dbReference type="EMBL" id="BC006411">
    <property type="status" value="NOT_ANNOTATED_CDS"/>
    <property type="molecule type" value="mRNA"/>
</dbReference>
<dbReference type="CCDS" id="CCDS2590.1">
    <molecule id="Q8NAC3-1"/>
</dbReference>
<dbReference type="CCDS" id="CCDS2591.2">
    <molecule id="Q8NAC3-3"/>
</dbReference>
<dbReference type="CCDS" id="CCDS46746.1">
    <molecule id="Q8NAC3-2"/>
</dbReference>
<dbReference type="CCDS" id="CCDS56240.1">
    <molecule id="Q8NAC3-5"/>
</dbReference>
<dbReference type="CCDS" id="CCDS56241.1">
    <molecule id="Q8NAC3-6"/>
</dbReference>
<dbReference type="CCDS" id="CCDS74898.1">
    <molecule id="Q8NAC3-7"/>
</dbReference>
<dbReference type="CCDS" id="CCDS93202.1">
    <molecule id="Q8NAC3-8"/>
</dbReference>
<dbReference type="RefSeq" id="NP_001190192.2">
    <molecule id="Q8NAC3-5"/>
    <property type="nucleotide sequence ID" value="NM_001203263.2"/>
</dbReference>
<dbReference type="RefSeq" id="NP_001190193.2">
    <molecule id="Q8NAC3-7"/>
    <property type="nucleotide sequence ID" value="NM_001203264.2"/>
</dbReference>
<dbReference type="RefSeq" id="NP_001190194.2">
    <molecule id="Q8NAC3-6"/>
    <property type="nucleotide sequence ID" value="NM_001203265.2"/>
</dbReference>
<dbReference type="RefSeq" id="NP_001354209.1">
    <molecule id="Q8NAC3-8"/>
    <property type="nucleotide sequence ID" value="NM_001367280.1"/>
</dbReference>
<dbReference type="RefSeq" id="NP_116121.3">
    <molecule id="Q8NAC3-3"/>
    <property type="nucleotide sequence ID" value="NM_032732.6"/>
</dbReference>
<dbReference type="RefSeq" id="NP_703190.2">
    <molecule id="Q8NAC3-2"/>
    <property type="nucleotide sequence ID" value="NM_153460.4"/>
</dbReference>
<dbReference type="RefSeq" id="NP_703191.2">
    <molecule id="Q8NAC3-1"/>
    <property type="nucleotide sequence ID" value="NM_153461.4"/>
</dbReference>
<dbReference type="RefSeq" id="XP_016862835.1">
    <property type="nucleotide sequence ID" value="XM_017007346.1"/>
</dbReference>
<dbReference type="PDB" id="6HG4">
    <property type="method" value="X-ray"/>
    <property type="resolution" value="3.32 A"/>
    <property type="chains" value="B=95-538"/>
</dbReference>
<dbReference type="PDB" id="6HG9">
    <property type="method" value="X-ray"/>
    <property type="resolution" value="3.62 A"/>
    <property type="chains" value="B=95-538"/>
</dbReference>
<dbReference type="PDB" id="6HGA">
    <property type="method" value="X-ray"/>
    <property type="resolution" value="2.60 A"/>
    <property type="chains" value="B=279-538"/>
</dbReference>
<dbReference type="PDB" id="7UWN">
    <property type="method" value="EM"/>
    <property type="resolution" value="3.01 A"/>
    <property type="chains" value="G=95-536"/>
</dbReference>
<dbReference type="PDB" id="7ZAN">
    <property type="method" value="X-ray"/>
    <property type="resolution" value="5.06 A"/>
    <property type="chains" value="D=95-538"/>
</dbReference>
<dbReference type="PDBsum" id="6HG4"/>
<dbReference type="PDBsum" id="6HG9"/>
<dbReference type="PDBsum" id="6HGA"/>
<dbReference type="PDBsum" id="7UWN"/>
<dbReference type="PDBsum" id="7ZAN"/>
<dbReference type="EMDB" id="EMD-26837"/>
<dbReference type="SMR" id="Q8NAC3"/>
<dbReference type="BioGRID" id="124278">
    <property type="interactions" value="53"/>
</dbReference>
<dbReference type="ComplexPortal" id="CPX-8776">
    <property type="entry name" value="Interleukin-17A-F receptor-ligand complex"/>
</dbReference>
<dbReference type="ComplexPortal" id="CPX-9201">
    <property type="entry name" value="Interleukin-17A receptor-ligand complex"/>
</dbReference>
<dbReference type="ComplexPortal" id="CPX-9202">
    <property type="entry name" value="Interleukin-17F receptor-ligand complex"/>
</dbReference>
<dbReference type="CORUM" id="Q8NAC3"/>
<dbReference type="FunCoup" id="Q8NAC3">
    <property type="interactions" value="949"/>
</dbReference>
<dbReference type="IntAct" id="Q8NAC3">
    <property type="interactions" value="49"/>
</dbReference>
<dbReference type="STRING" id="9606.ENSP00000295981"/>
<dbReference type="DrugCentral" id="Q8NAC3"/>
<dbReference type="GlyCosmos" id="Q8NAC3">
    <property type="glycosylation" value="9 sites, No reported glycans"/>
</dbReference>
<dbReference type="GlyGen" id="Q8NAC3">
    <property type="glycosylation" value="9 sites, 1 N-linked glycan (2 sites)"/>
</dbReference>
<dbReference type="iPTMnet" id="Q8NAC3"/>
<dbReference type="PhosphoSitePlus" id="Q8NAC3"/>
<dbReference type="BioMuta" id="IL17RC"/>
<dbReference type="DMDM" id="229462881"/>
<dbReference type="jPOST" id="Q8NAC3"/>
<dbReference type="MassIVE" id="Q8NAC3"/>
<dbReference type="PaxDb" id="9606-ENSP00000295981"/>
<dbReference type="PeptideAtlas" id="Q8NAC3"/>
<dbReference type="ProteomicsDB" id="20526"/>
<dbReference type="ProteomicsDB" id="20554"/>
<dbReference type="ProteomicsDB" id="72669">
    <molecule id="Q8NAC3-1"/>
</dbReference>
<dbReference type="ProteomicsDB" id="72670">
    <molecule id="Q8NAC3-2"/>
</dbReference>
<dbReference type="ProteomicsDB" id="72671">
    <molecule id="Q8NAC3-3"/>
</dbReference>
<dbReference type="ProteomicsDB" id="72672">
    <molecule id="Q8NAC3-4"/>
</dbReference>
<dbReference type="Antibodypedia" id="10412">
    <property type="antibodies" value="338 antibodies from 34 providers"/>
</dbReference>
<dbReference type="DNASU" id="84818"/>
<dbReference type="Ensembl" id="ENST00000295981.7">
    <molecule id="Q8NAC3-1"/>
    <property type="protein sequence ID" value="ENSP00000295981.3"/>
    <property type="gene ID" value="ENSG00000163702.21"/>
</dbReference>
<dbReference type="Ensembl" id="ENST00000383812.9">
    <molecule id="Q8NAC3-3"/>
    <property type="protein sequence ID" value="ENSP00000373323.4"/>
    <property type="gene ID" value="ENSG00000163702.21"/>
</dbReference>
<dbReference type="Ensembl" id="ENST00000403601.8">
    <molecule id="Q8NAC3-2"/>
    <property type="protein sequence ID" value="ENSP00000384969.3"/>
    <property type="gene ID" value="ENSG00000163702.21"/>
</dbReference>
<dbReference type="Ensembl" id="ENST00000413608.2">
    <molecule id="Q8NAC3-5"/>
    <property type="protein sequence ID" value="ENSP00000396064.1"/>
    <property type="gene ID" value="ENSG00000163702.21"/>
</dbReference>
<dbReference type="Ensembl" id="ENST00000416074.6">
    <molecule id="Q8NAC3-7"/>
    <property type="protein sequence ID" value="ENSP00000395315.3"/>
    <property type="gene ID" value="ENSG00000163702.21"/>
</dbReference>
<dbReference type="Ensembl" id="ENST00000455057.5">
    <molecule id="Q8NAC3-6"/>
    <property type="protein sequence ID" value="ENSP00000407894.1"/>
    <property type="gene ID" value="ENSG00000163702.21"/>
</dbReference>
<dbReference type="Ensembl" id="ENST00000483582.5">
    <molecule id="Q8NAC3-4"/>
    <property type="protein sequence ID" value="ENSP00000512844.1"/>
    <property type="gene ID" value="ENSG00000163702.21"/>
</dbReference>
<dbReference type="Ensembl" id="ENST00000696816.1">
    <molecule id="Q8NAC3-8"/>
    <property type="protein sequence ID" value="ENSP00000512897.1"/>
    <property type="gene ID" value="ENSG00000163702.21"/>
</dbReference>
<dbReference type="GeneID" id="84818"/>
<dbReference type="KEGG" id="hsa:84818"/>
<dbReference type="MANE-Select" id="ENST00000403601.8">
    <molecule id="Q8NAC3-2"/>
    <property type="protein sequence ID" value="ENSP00000384969.3"/>
    <property type="RefSeq nucleotide sequence ID" value="NM_153460.4"/>
    <property type="RefSeq protein sequence ID" value="NP_703190.2"/>
</dbReference>
<dbReference type="UCSC" id="uc003btz.4">
    <molecule id="Q8NAC3-1"/>
    <property type="organism name" value="human"/>
</dbReference>
<dbReference type="AGR" id="HGNC:18358"/>
<dbReference type="CTD" id="84818"/>
<dbReference type="DisGeNET" id="84818"/>
<dbReference type="GeneCards" id="IL17RC"/>
<dbReference type="HGNC" id="HGNC:18358">
    <property type="gene designation" value="IL17RC"/>
</dbReference>
<dbReference type="HPA" id="ENSG00000163702">
    <property type="expression patterns" value="Low tissue specificity"/>
</dbReference>
<dbReference type="MalaCards" id="IL17RC"/>
<dbReference type="MIM" id="610925">
    <property type="type" value="gene"/>
</dbReference>
<dbReference type="MIM" id="616445">
    <property type="type" value="phenotype"/>
</dbReference>
<dbReference type="neXtProt" id="NX_Q8NAC3"/>
<dbReference type="OpenTargets" id="ENSG00000163702"/>
<dbReference type="Orphanet" id="1334">
    <property type="disease" value="Chronic mucocutaneous candidiasis"/>
</dbReference>
<dbReference type="PharmGKB" id="PA134986616"/>
<dbReference type="VEuPathDB" id="HostDB:ENSG00000163702"/>
<dbReference type="eggNOG" id="ENOG502RYE0">
    <property type="taxonomic scope" value="Eukaryota"/>
</dbReference>
<dbReference type="GeneTree" id="ENSGT00730000111286"/>
<dbReference type="HOGENOM" id="CLU_026893_1_0_1"/>
<dbReference type="InParanoid" id="Q8NAC3"/>
<dbReference type="OMA" id="RTEEWMH"/>
<dbReference type="OrthoDB" id="9949622at2759"/>
<dbReference type="PAN-GO" id="Q8NAC3">
    <property type="GO annotations" value="1 GO annotation based on evolutionary models"/>
</dbReference>
<dbReference type="PhylomeDB" id="Q8NAC3"/>
<dbReference type="TreeFam" id="TF335852"/>
<dbReference type="PathwayCommons" id="Q8NAC3"/>
<dbReference type="Reactome" id="R-HSA-448424">
    <property type="pathway name" value="Interleukin-17 signaling"/>
</dbReference>
<dbReference type="Reactome" id="R-HSA-9705671">
    <property type="pathway name" value="SARS-CoV-2 activates/modulates innate and adaptive immune responses"/>
</dbReference>
<dbReference type="SignaLink" id="Q8NAC3"/>
<dbReference type="SIGNOR" id="Q8NAC3"/>
<dbReference type="BioGRID-ORCS" id="84818">
    <property type="hits" value="14 hits in 1156 CRISPR screens"/>
</dbReference>
<dbReference type="ChiTaRS" id="IL17RC">
    <property type="organism name" value="human"/>
</dbReference>
<dbReference type="GeneWiki" id="IL17RC"/>
<dbReference type="GenomeRNAi" id="84818"/>
<dbReference type="Pharos" id="Q8NAC3">
    <property type="development level" value="Tclin"/>
</dbReference>
<dbReference type="PRO" id="PR:Q8NAC3"/>
<dbReference type="Proteomes" id="UP000005640">
    <property type="component" value="Chromosome 3"/>
</dbReference>
<dbReference type="RNAct" id="Q8NAC3">
    <property type="molecule type" value="protein"/>
</dbReference>
<dbReference type="Bgee" id="ENSG00000163702">
    <property type="expression patterns" value="Expressed in adenohypophysis and 168 other cell types or tissues"/>
</dbReference>
<dbReference type="ExpressionAtlas" id="Q8NAC3">
    <property type="expression patterns" value="baseline and differential"/>
</dbReference>
<dbReference type="GO" id="GO:0009986">
    <property type="term" value="C:cell surface"/>
    <property type="evidence" value="ECO:0007669"/>
    <property type="project" value="Ensembl"/>
</dbReference>
<dbReference type="GO" id="GO:0005886">
    <property type="term" value="C:plasma membrane"/>
    <property type="evidence" value="ECO:0000304"/>
    <property type="project" value="Reactome"/>
</dbReference>
<dbReference type="GO" id="GO:0015026">
    <property type="term" value="F:coreceptor activity"/>
    <property type="evidence" value="ECO:0000314"/>
    <property type="project" value="UniProt"/>
</dbReference>
<dbReference type="GO" id="GO:0030368">
    <property type="term" value="F:interleukin-17 receptor activity"/>
    <property type="evidence" value="ECO:0000314"/>
    <property type="project" value="MGI"/>
</dbReference>
<dbReference type="GO" id="GO:0005102">
    <property type="term" value="F:signaling receptor binding"/>
    <property type="evidence" value="ECO:0007669"/>
    <property type="project" value="Ensembl"/>
</dbReference>
<dbReference type="GO" id="GO:0050832">
    <property type="term" value="P:defense response to fungus"/>
    <property type="evidence" value="ECO:0007669"/>
    <property type="project" value="Ensembl"/>
</dbReference>
<dbReference type="GO" id="GO:0071621">
    <property type="term" value="P:granulocyte chemotaxis"/>
    <property type="evidence" value="ECO:0007669"/>
    <property type="project" value="Ensembl"/>
</dbReference>
<dbReference type="GO" id="GO:0006954">
    <property type="term" value="P:inflammatory response"/>
    <property type="evidence" value="ECO:0007669"/>
    <property type="project" value="UniProtKB-KW"/>
</dbReference>
<dbReference type="GO" id="GO:0038173">
    <property type="term" value="P:interleukin-17A-mediated signaling pathway"/>
    <property type="evidence" value="ECO:0000314"/>
    <property type="project" value="UniProt"/>
</dbReference>
<dbReference type="GO" id="GO:1900017">
    <property type="term" value="P:positive regulation of cytokine production involved in inflammatory response"/>
    <property type="evidence" value="ECO:0007669"/>
    <property type="project" value="Ensembl"/>
</dbReference>
<dbReference type="GO" id="GO:0032755">
    <property type="term" value="P:positive regulation of interleukin-6 production"/>
    <property type="evidence" value="ECO:0007669"/>
    <property type="project" value="Ensembl"/>
</dbReference>
<dbReference type="FunFam" id="3.40.50.11530:FF:000001">
    <property type="entry name" value="interleukin-17 receptor C isoform X1"/>
    <property type="match status" value="1"/>
</dbReference>
<dbReference type="Gene3D" id="3.40.50.11530">
    <property type="match status" value="1"/>
</dbReference>
<dbReference type="InterPro" id="IPR039465">
    <property type="entry name" value="IL-17_rcpt-like"/>
</dbReference>
<dbReference type="InterPro" id="IPR027841">
    <property type="entry name" value="IL-17_rcpt_C/E_N"/>
</dbReference>
<dbReference type="InterPro" id="IPR013568">
    <property type="entry name" value="SEFIR_dom"/>
</dbReference>
<dbReference type="PANTHER" id="PTHR15583">
    <property type="entry name" value="INTERLEUKIN-17 RECEPTOR"/>
    <property type="match status" value="1"/>
</dbReference>
<dbReference type="PANTHER" id="PTHR15583:SF12">
    <property type="entry name" value="INTERLEUKIN-17 RECEPTOR C"/>
    <property type="match status" value="1"/>
</dbReference>
<dbReference type="Pfam" id="PF15037">
    <property type="entry name" value="IL17_R_N"/>
    <property type="match status" value="1"/>
</dbReference>
<dbReference type="Pfam" id="PF08357">
    <property type="entry name" value="SEFIR"/>
    <property type="match status" value="1"/>
</dbReference>
<dbReference type="PROSITE" id="PS51534">
    <property type="entry name" value="SEFIR"/>
    <property type="match status" value="1"/>
</dbReference>
<proteinExistence type="evidence at protein level"/>
<organism>
    <name type="scientific">Homo sapiens</name>
    <name type="common">Human</name>
    <dbReference type="NCBI Taxonomy" id="9606"/>
    <lineage>
        <taxon>Eukaryota</taxon>
        <taxon>Metazoa</taxon>
        <taxon>Chordata</taxon>
        <taxon>Craniata</taxon>
        <taxon>Vertebrata</taxon>
        <taxon>Euteleostomi</taxon>
        <taxon>Mammalia</taxon>
        <taxon>Eutheria</taxon>
        <taxon>Euarchontoglires</taxon>
        <taxon>Primates</taxon>
        <taxon>Haplorrhini</taxon>
        <taxon>Catarrhini</taxon>
        <taxon>Hominidae</taxon>
        <taxon>Homo</taxon>
    </lineage>
</organism>
<reference key="1">
    <citation type="journal article" date="2007" name="J. Immunol.">
        <title>Identification of the IL-17 receptor related molecule IL-17RC as the receptor for IL-17F.</title>
        <authorList>
            <person name="Kuestner R.E."/>
            <person name="Taft D.W."/>
            <person name="Haran A."/>
            <person name="Brandt C.S."/>
            <person name="Brender T."/>
            <person name="Lum K."/>
            <person name="Harder B."/>
            <person name="Okada S."/>
            <person name="Ostrander C.D."/>
            <person name="Kreindler J.L."/>
            <person name="Aujla S.J."/>
            <person name="Reardon B."/>
            <person name="Moore M."/>
            <person name="Shea P."/>
            <person name="Schreckhise R."/>
            <person name="Bukowski T.R."/>
            <person name="Presnell S."/>
            <person name="Guerra-Lewis P."/>
            <person name="Parrish-Novak J."/>
            <person name="Ellsworth J.L."/>
            <person name="Jaspers S."/>
            <person name="Lewis K.E."/>
            <person name="Appleby M."/>
            <person name="Kolls J.K."/>
            <person name="Rixon M."/>
            <person name="West J.W."/>
            <person name="Gao Z."/>
            <person name="Levin S.D."/>
        </authorList>
    </citation>
    <scope>NUCLEOTIDE SEQUENCE [MRNA] (ISOFORMS 5; 6 AND 7)</scope>
    <scope>FUNCTION</scope>
    <scope>SUBCELLULAR LOCATION</scope>
    <scope>TISSUE SPECIFICITY</scope>
    <scope>ALTERNATIVE SPLICING</scope>
</reference>
<reference key="2">
    <citation type="patent" date="2003-02-04" number="JP2003504058">
        <authorList>
            <person name="Presnell S.R."/>
            <person name="Burkhead S.K."/>
            <person name="Pownder S.L."/>
        </authorList>
    </citation>
    <scope>NUCLEOTIDE SEQUENCE [MRNA] (ISOFORM 8)</scope>
</reference>
<reference key="3">
    <citation type="submission" date="2001-12" db="EMBL/GenBank/DDBJ databases">
        <title>Identification of novel IL-17 related receptors.</title>
        <authorList>
            <person name="Gilbert J.M."/>
            <person name="Gorman D.M."/>
        </authorList>
    </citation>
    <scope>NUCLEOTIDE SEQUENCE [MRNA] (ISOFORM 2)</scope>
    <scope>VARIANT LEU-182</scope>
</reference>
<reference key="4">
    <citation type="journal article" date="2003" name="Genome Res.">
        <title>The secreted protein discovery initiative (SPDI), a large-scale effort to identify novel human secreted and transmembrane proteins: a bioinformatics assessment.</title>
        <authorList>
            <person name="Clark H.F."/>
            <person name="Gurney A.L."/>
            <person name="Abaya E."/>
            <person name="Baker K."/>
            <person name="Baldwin D.T."/>
            <person name="Brush J."/>
            <person name="Chen J."/>
            <person name="Chow B."/>
            <person name="Chui C."/>
            <person name="Crowley C."/>
            <person name="Currell B."/>
            <person name="Deuel B."/>
            <person name="Dowd P."/>
            <person name="Eaton D."/>
            <person name="Foster J.S."/>
            <person name="Grimaldi C."/>
            <person name="Gu Q."/>
            <person name="Hass P.E."/>
            <person name="Heldens S."/>
            <person name="Huang A."/>
            <person name="Kim H.S."/>
            <person name="Klimowski L."/>
            <person name="Jin Y."/>
            <person name="Johnson S."/>
            <person name="Lee J."/>
            <person name="Lewis L."/>
            <person name="Liao D."/>
            <person name="Mark M.R."/>
            <person name="Robbie E."/>
            <person name="Sanchez C."/>
            <person name="Schoenfeld J."/>
            <person name="Seshagiri S."/>
            <person name="Simmons L."/>
            <person name="Singh J."/>
            <person name="Smith V."/>
            <person name="Stinson J."/>
            <person name="Vagts A."/>
            <person name="Vandlen R.L."/>
            <person name="Watanabe C."/>
            <person name="Wieand D."/>
            <person name="Woods K."/>
            <person name="Xie M.-H."/>
            <person name="Yansura D.G."/>
            <person name="Yi S."/>
            <person name="Yu G."/>
            <person name="Yuan J."/>
            <person name="Zhang M."/>
            <person name="Zhang Z."/>
            <person name="Goddard A.D."/>
            <person name="Wood W.I."/>
            <person name="Godowski P.J."/>
            <person name="Gray A.M."/>
        </authorList>
    </citation>
    <scope>NUCLEOTIDE SEQUENCE [LARGE SCALE MRNA] (ISOFORM 3)</scope>
</reference>
<reference key="5">
    <citation type="journal article" date="2004" name="Nat. Genet.">
        <title>Complete sequencing and characterization of 21,243 full-length human cDNAs.</title>
        <authorList>
            <person name="Ota T."/>
            <person name="Suzuki Y."/>
            <person name="Nishikawa T."/>
            <person name="Otsuki T."/>
            <person name="Sugiyama T."/>
            <person name="Irie R."/>
            <person name="Wakamatsu A."/>
            <person name="Hayashi K."/>
            <person name="Sato H."/>
            <person name="Nagai K."/>
            <person name="Kimura K."/>
            <person name="Makita H."/>
            <person name="Sekine M."/>
            <person name="Obayashi M."/>
            <person name="Nishi T."/>
            <person name="Shibahara T."/>
            <person name="Tanaka T."/>
            <person name="Ishii S."/>
            <person name="Yamamoto J."/>
            <person name="Saito K."/>
            <person name="Kawai Y."/>
            <person name="Isono Y."/>
            <person name="Nakamura Y."/>
            <person name="Nagahari K."/>
            <person name="Murakami K."/>
            <person name="Yasuda T."/>
            <person name="Iwayanagi T."/>
            <person name="Wagatsuma M."/>
            <person name="Shiratori A."/>
            <person name="Sudo H."/>
            <person name="Hosoiri T."/>
            <person name="Kaku Y."/>
            <person name="Kodaira H."/>
            <person name="Kondo H."/>
            <person name="Sugawara M."/>
            <person name="Takahashi M."/>
            <person name="Kanda K."/>
            <person name="Yokoi T."/>
            <person name="Furuya T."/>
            <person name="Kikkawa E."/>
            <person name="Omura Y."/>
            <person name="Abe K."/>
            <person name="Kamihara K."/>
            <person name="Katsuta N."/>
            <person name="Sato K."/>
            <person name="Tanikawa M."/>
            <person name="Yamazaki M."/>
            <person name="Ninomiya K."/>
            <person name="Ishibashi T."/>
            <person name="Yamashita H."/>
            <person name="Murakawa K."/>
            <person name="Fujimori K."/>
            <person name="Tanai H."/>
            <person name="Kimata M."/>
            <person name="Watanabe M."/>
            <person name="Hiraoka S."/>
            <person name="Chiba Y."/>
            <person name="Ishida S."/>
            <person name="Ono Y."/>
            <person name="Takiguchi S."/>
            <person name="Watanabe S."/>
            <person name="Yosida M."/>
            <person name="Hotuta T."/>
            <person name="Kusano J."/>
            <person name="Kanehori K."/>
            <person name="Takahashi-Fujii A."/>
            <person name="Hara H."/>
            <person name="Tanase T.-O."/>
            <person name="Nomura Y."/>
            <person name="Togiya S."/>
            <person name="Komai F."/>
            <person name="Hara R."/>
            <person name="Takeuchi K."/>
            <person name="Arita M."/>
            <person name="Imose N."/>
            <person name="Musashino K."/>
            <person name="Yuuki H."/>
            <person name="Oshima A."/>
            <person name="Sasaki N."/>
            <person name="Aotsuka S."/>
            <person name="Yoshikawa Y."/>
            <person name="Matsunawa H."/>
            <person name="Ichihara T."/>
            <person name="Shiohata N."/>
            <person name="Sano S."/>
            <person name="Moriya S."/>
            <person name="Momiyama H."/>
            <person name="Satoh N."/>
            <person name="Takami S."/>
            <person name="Terashima Y."/>
            <person name="Suzuki O."/>
            <person name="Nakagawa S."/>
            <person name="Senoh A."/>
            <person name="Mizoguchi H."/>
            <person name="Goto Y."/>
            <person name="Shimizu F."/>
            <person name="Wakebe H."/>
            <person name="Hishigaki H."/>
            <person name="Watanabe T."/>
            <person name="Sugiyama A."/>
            <person name="Takemoto M."/>
            <person name="Kawakami B."/>
            <person name="Yamazaki M."/>
            <person name="Watanabe K."/>
            <person name="Kumagai A."/>
            <person name="Itakura S."/>
            <person name="Fukuzumi Y."/>
            <person name="Fujimori Y."/>
            <person name="Komiyama M."/>
            <person name="Tashiro H."/>
            <person name="Tanigami A."/>
            <person name="Fujiwara T."/>
            <person name="Ono T."/>
            <person name="Yamada K."/>
            <person name="Fujii Y."/>
            <person name="Ozaki K."/>
            <person name="Hirao M."/>
            <person name="Ohmori Y."/>
            <person name="Kawabata A."/>
            <person name="Hikiji T."/>
            <person name="Kobatake N."/>
            <person name="Inagaki H."/>
            <person name="Ikema Y."/>
            <person name="Okamoto S."/>
            <person name="Okitani R."/>
            <person name="Kawakami T."/>
            <person name="Noguchi S."/>
            <person name="Itoh T."/>
            <person name="Shigeta K."/>
            <person name="Senba T."/>
            <person name="Matsumura K."/>
            <person name="Nakajima Y."/>
            <person name="Mizuno T."/>
            <person name="Morinaga M."/>
            <person name="Sasaki M."/>
            <person name="Togashi T."/>
            <person name="Oyama M."/>
            <person name="Hata H."/>
            <person name="Watanabe M."/>
            <person name="Komatsu T."/>
            <person name="Mizushima-Sugano J."/>
            <person name="Satoh T."/>
            <person name="Shirai Y."/>
            <person name="Takahashi Y."/>
            <person name="Nakagawa K."/>
            <person name="Okumura K."/>
            <person name="Nagase T."/>
            <person name="Nomura N."/>
            <person name="Kikuchi H."/>
            <person name="Masuho Y."/>
            <person name="Yamashita R."/>
            <person name="Nakai K."/>
            <person name="Yada T."/>
            <person name="Nakamura Y."/>
            <person name="Ohara O."/>
            <person name="Isogai T."/>
            <person name="Sugano S."/>
        </authorList>
    </citation>
    <scope>NUCLEOTIDE SEQUENCE [LARGE SCALE MRNA] (ISOFORM 1)</scope>
    <scope>VARIANT LEU-182</scope>
    <source>
        <tissue>Spleen</tissue>
    </source>
</reference>
<reference key="6">
    <citation type="journal article" date="2006" name="Nature">
        <title>The DNA sequence, annotation and analysis of human chromosome 3.</title>
        <authorList>
            <person name="Muzny D.M."/>
            <person name="Scherer S.E."/>
            <person name="Kaul R."/>
            <person name="Wang J."/>
            <person name="Yu J."/>
            <person name="Sudbrak R."/>
            <person name="Buhay C.J."/>
            <person name="Chen R."/>
            <person name="Cree A."/>
            <person name="Ding Y."/>
            <person name="Dugan-Rocha S."/>
            <person name="Gill R."/>
            <person name="Gunaratne P."/>
            <person name="Harris R.A."/>
            <person name="Hawes A.C."/>
            <person name="Hernandez J."/>
            <person name="Hodgson A.V."/>
            <person name="Hume J."/>
            <person name="Jackson A."/>
            <person name="Khan Z.M."/>
            <person name="Kovar-Smith C."/>
            <person name="Lewis L.R."/>
            <person name="Lozado R.J."/>
            <person name="Metzker M.L."/>
            <person name="Milosavljevic A."/>
            <person name="Miner G.R."/>
            <person name="Morgan M.B."/>
            <person name="Nazareth L.V."/>
            <person name="Scott G."/>
            <person name="Sodergren E."/>
            <person name="Song X.-Z."/>
            <person name="Steffen D."/>
            <person name="Wei S."/>
            <person name="Wheeler D.A."/>
            <person name="Wright M.W."/>
            <person name="Worley K.C."/>
            <person name="Yuan Y."/>
            <person name="Zhang Z."/>
            <person name="Adams C.Q."/>
            <person name="Ansari-Lari M.A."/>
            <person name="Ayele M."/>
            <person name="Brown M.J."/>
            <person name="Chen G."/>
            <person name="Chen Z."/>
            <person name="Clendenning J."/>
            <person name="Clerc-Blankenburg K.P."/>
            <person name="Chen R."/>
            <person name="Chen Z."/>
            <person name="Davis C."/>
            <person name="Delgado O."/>
            <person name="Dinh H.H."/>
            <person name="Dong W."/>
            <person name="Draper H."/>
            <person name="Ernst S."/>
            <person name="Fu G."/>
            <person name="Gonzalez-Garay M.L."/>
            <person name="Garcia D.K."/>
            <person name="Gillett W."/>
            <person name="Gu J."/>
            <person name="Hao B."/>
            <person name="Haugen E."/>
            <person name="Havlak P."/>
            <person name="He X."/>
            <person name="Hennig S."/>
            <person name="Hu S."/>
            <person name="Huang W."/>
            <person name="Jackson L.R."/>
            <person name="Jacob L.S."/>
            <person name="Kelly S.H."/>
            <person name="Kube M."/>
            <person name="Levy R."/>
            <person name="Li Z."/>
            <person name="Liu B."/>
            <person name="Liu J."/>
            <person name="Liu W."/>
            <person name="Lu J."/>
            <person name="Maheshwari M."/>
            <person name="Nguyen B.-V."/>
            <person name="Okwuonu G.O."/>
            <person name="Palmeiri A."/>
            <person name="Pasternak S."/>
            <person name="Perez L.M."/>
            <person name="Phelps K.A."/>
            <person name="Plopper F.J."/>
            <person name="Qiang B."/>
            <person name="Raymond C."/>
            <person name="Rodriguez R."/>
            <person name="Saenphimmachak C."/>
            <person name="Santibanez J."/>
            <person name="Shen H."/>
            <person name="Shen Y."/>
            <person name="Subramanian S."/>
            <person name="Tabor P.E."/>
            <person name="Verduzco D."/>
            <person name="Waldron L."/>
            <person name="Wang J."/>
            <person name="Wang J."/>
            <person name="Wang Q."/>
            <person name="Williams G.A."/>
            <person name="Wong G.K.-S."/>
            <person name="Yao Z."/>
            <person name="Zhang J."/>
            <person name="Zhang X."/>
            <person name="Zhao G."/>
            <person name="Zhou J."/>
            <person name="Zhou Y."/>
            <person name="Nelson D."/>
            <person name="Lehrach H."/>
            <person name="Reinhardt R."/>
            <person name="Naylor S.L."/>
            <person name="Yang H."/>
            <person name="Olson M."/>
            <person name="Weinstock G."/>
            <person name="Gibbs R.A."/>
        </authorList>
    </citation>
    <scope>NUCLEOTIDE SEQUENCE [LARGE SCALE GENOMIC DNA]</scope>
</reference>
<reference key="7">
    <citation type="journal article" date="2004" name="Genome Res.">
        <title>The status, quality, and expansion of the NIH full-length cDNA project: the Mammalian Gene Collection (MGC).</title>
        <authorList>
            <consortium name="The MGC Project Team"/>
        </authorList>
    </citation>
    <scope>NUCLEOTIDE SEQUENCE [LARGE SCALE MRNA] (ISOFORM 4)</scope>
    <source>
        <tissue>Uterus</tissue>
    </source>
</reference>
<reference key="8">
    <citation type="journal article" date="2004" name="Protein Sci.">
        <title>Signal peptide prediction based on analysis of experimentally verified cleavage sites.</title>
        <authorList>
            <person name="Zhang Z."/>
            <person name="Henzel W.J."/>
        </authorList>
    </citation>
    <scope>PROTEIN SEQUENCE OF 21-35</scope>
</reference>
<reference key="9">
    <citation type="journal article" date="2002" name="J. Biol. Chem.">
        <title>Soluble and transmembrane isoforms of novel interleukin-17 receptor-like protein by RNA splicing and expression in prostate cancer.</title>
        <authorList>
            <person name="Haudenschild D."/>
            <person name="Moseley T."/>
            <person name="Rose L."/>
            <person name="Reddi A.H."/>
        </authorList>
    </citation>
    <scope>ALTERNATIVE SPLICING</scope>
    <scope>TISSUE SPECIFICITY</scope>
</reference>
<reference key="10">
    <citation type="journal article" date="2003" name="Br. J. Pharmacol.">
        <title>Using gene expression profiling to identify the molecular basis of the synergistic actions of hepatocyte growth factor and vascular endothelial growth factor in human endothelial cells.</title>
        <authorList>
            <person name="Gerritsen M.E."/>
            <person name="Tomlinson J.E."/>
            <person name="Zlot C."/>
            <person name="Ziman M."/>
            <person name="Hwang S."/>
        </authorList>
    </citation>
    <scope>INDUCTION BY HGF AND VEGF</scope>
</reference>
<reference key="11">
    <citation type="journal article" date="2006" name="J. Immunol.">
        <title>Interleukin 17 signals through a heteromeric receptor complex.</title>
        <authorList>
            <person name="Toy D."/>
            <person name="Kugler D."/>
            <person name="Wolfson M."/>
            <person name="Vanden Bos T."/>
            <person name="Gurgel J."/>
            <person name="Derry J."/>
            <person name="Tocker J."/>
            <person name="Peschon J."/>
        </authorList>
    </citation>
    <scope>FUNCTION</scope>
    <scope>SUBUNIT</scope>
</reference>
<reference key="12">
    <citation type="journal article" date="2008" name="J. Immunol.">
        <title>The human IL-17F/IL-17A heterodimeric cytokine signals through the IL-17RA/IL-17RC receptor complex.</title>
        <authorList>
            <person name="Wright J.F."/>
            <person name="Bennett F."/>
            <person name="Li B."/>
            <person name="Brooks J."/>
            <person name="Luxenberg D.P."/>
            <person name="Whitters M.J."/>
            <person name="Tomkinson K.N."/>
            <person name="Fitz L.J."/>
            <person name="Wolfman N.M."/>
            <person name="Collins M."/>
            <person name="Dunussi-Joannopoulos K."/>
            <person name="Chatterjee-Kishore M."/>
            <person name="Carreno B.M."/>
        </authorList>
    </citation>
    <scope>FUNCTION</scope>
    <scope>SUBUNIT</scope>
</reference>
<reference key="13">
    <citation type="journal article" date="2013" name="Immunity">
        <title>An ACT1 mutation selectively abolishes interleukin-17 responses in humans with chronic mucocutaneous candidiasis.</title>
        <authorList>
            <person name="Boisson B."/>
            <person name="Wang C."/>
            <person name="Pedergnana V."/>
            <person name="Wu L."/>
            <person name="Cypowyj S."/>
            <person name="Rybojad M."/>
            <person name="Belkadi A."/>
            <person name="Picard C."/>
            <person name="Abel L."/>
            <person name="Fieschi C."/>
            <person name="Puel A."/>
            <person name="Li X."/>
            <person name="Casanova J.L."/>
        </authorList>
    </citation>
    <scope>INTERACTION WITH TRAF3IP2</scope>
</reference>
<reference key="14">
    <citation type="journal article" date="2017" name="Sci. Rep.">
        <title>The human IL-17A/F heterodimer: a two-faced cytokine with unique receptor recognition properties.</title>
        <authorList>
            <person name="Goepfert A."/>
            <person name="Lehmann S."/>
            <person name="Wirth E."/>
            <person name="Rondeau J.M."/>
        </authorList>
    </citation>
    <scope>INTERACTION WITH IL17A AND IL17F</scope>
</reference>
<reference key="15">
    <citation type="journal article" date="2020" name="Immunity">
        <title>Structural Analysis Reveals that the Cytokine IL-17F Forms a Homodimeric Complex with Receptor IL-17RC to Drive IL-17RA-Independent Signaling.</title>
        <authorList>
            <person name="Goepfert A."/>
            <person name="Lehmann S."/>
            <person name="Blank J."/>
            <person name="Kolbinger F."/>
            <person name="Rondeau J.M."/>
        </authorList>
    </citation>
    <scope>X-RAY CRYSTALLOGRAPHY (2.60 ANGSTROMS) OF 279-538 IN COMPLEX WITH IL17F</scope>
    <scope>DISULFIDE BOND</scope>
    <scope>INTERACTION WITH IL17RA; IL17F AND IL17A</scope>
    <scope>FUNCTION</scope>
</reference>
<reference key="16">
    <citation type="journal article" date="2015" name="J. Exp. Med.">
        <title>Inherited IL-17RC deficiency in patients with chronic mucocutaneous candidiasis.</title>
        <authorList>
            <person name="Ling Y."/>
            <person name="Cypowyj S."/>
            <person name="Aytekin C."/>
            <person name="Galicchio M."/>
            <person name="Camcioglu Y."/>
            <person name="Nepesov S."/>
            <person name="Ikinciogullari A."/>
            <person name="Dogu F."/>
            <person name="Belkadi A."/>
            <person name="Levy R."/>
            <person name="Migaud M."/>
            <person name="Boisson B."/>
            <person name="Bolze A."/>
            <person name="Itan Y."/>
            <person name="Goudin N."/>
            <person name="Cottineau J."/>
            <person name="Picard C."/>
            <person name="Abel L."/>
            <person name="Bustamante J."/>
            <person name="Casanova J.L."/>
            <person name="Puel A."/>
        </authorList>
    </citation>
    <scope>INVOLVEMENT IN CANDF9</scope>
</reference>
<feature type="signal peptide" evidence="8">
    <location>
        <begin position="1"/>
        <end position="20"/>
    </location>
</feature>
<feature type="chain" id="PRO_0000011034" description="Interleukin-17 receptor C">
    <location>
        <begin position="21"/>
        <end position="791"/>
    </location>
</feature>
<feature type="topological domain" description="Extracellular" evidence="2">
    <location>
        <begin position="21"/>
        <end position="538"/>
    </location>
</feature>
<feature type="transmembrane region" description="Helical" evidence="2">
    <location>
        <begin position="539"/>
        <end position="559"/>
    </location>
</feature>
<feature type="topological domain" description="Cytoplasmic" evidence="2">
    <location>
        <begin position="560"/>
        <end position="791"/>
    </location>
</feature>
<feature type="domain" description="SEFIR" evidence="3">
    <location>
        <begin position="583"/>
        <end position="735"/>
    </location>
</feature>
<feature type="region of interest" description="Disordered" evidence="4">
    <location>
        <begin position="762"/>
        <end position="791"/>
    </location>
</feature>
<feature type="compositionally biased region" description="Gly residues" evidence="4">
    <location>
        <begin position="777"/>
        <end position="791"/>
    </location>
</feature>
<feature type="glycosylation site" description="N-linked (GlcNAc...) asparagine" evidence="2">
    <location>
        <position position="189"/>
    </location>
</feature>
<feature type="glycosylation site" description="N-linked (GlcNAc...) asparagine" evidence="2">
    <location>
        <position position="257"/>
    </location>
</feature>
<feature type="glycosylation site" description="N-linked (GlcNAc...) asparagine" evidence="2">
    <location>
        <position position="284"/>
    </location>
</feature>
<feature type="glycosylation site" description="N-linked (GlcNAc...) asparagine" evidence="2">
    <location>
        <position position="297"/>
    </location>
</feature>
<feature type="glycosylation site" description="N-linked (GlcNAc...) asparagine" evidence="2">
    <location>
        <position position="324"/>
    </location>
</feature>
<feature type="glycosylation site" description="N-linked (GlcNAc...) asparagine" evidence="2">
    <location>
        <position position="334"/>
    </location>
</feature>
<feature type="glycosylation site" description="N-linked (GlcNAc...) asparagine" evidence="2">
    <location>
        <position position="420"/>
    </location>
</feature>
<feature type="glycosylation site" description="N-linked (GlcNAc...) asparagine" evidence="2">
    <location>
        <position position="443"/>
    </location>
</feature>
<feature type="glycosylation site" description="N-linked (GlcNAc...) asparagine" evidence="2">
    <location>
        <position position="477"/>
    </location>
</feature>
<feature type="disulfide bond" evidence="15 20">
    <location>
        <begin position="265"/>
        <end position="277"/>
    </location>
</feature>
<feature type="disulfide bond" evidence="15 20">
    <location>
        <begin position="341"/>
        <end position="391"/>
    </location>
</feature>
<feature type="disulfide bond" evidence="15 20">
    <location>
        <begin position="343"/>
        <end position="359"/>
    </location>
</feature>
<feature type="disulfide bond" evidence="15 20">
    <location>
        <begin position="400"/>
        <end position="409"/>
    </location>
</feature>
<feature type="disulfide bond" evidence="15 20">
    <location>
        <begin position="439"/>
        <end position="453"/>
    </location>
</feature>
<feature type="disulfide bond" evidence="15 20">
    <location>
        <begin position="481"/>
        <end position="488"/>
    </location>
</feature>
<feature type="disulfide bond" evidence="15 20">
    <location>
        <begin position="515"/>
        <end position="529"/>
    </location>
</feature>
<feature type="splice variant" id="VSP_014138" description="In isoform 2, isoform 3, isoform 4, isoform 5, isoform 6, isoform 7 and isoform 8." evidence="10 16 17 18">
    <location>
        <begin position="36"/>
        <end position="106"/>
    </location>
</feature>
<feature type="splice variant" id="VSP_014139" description="In isoform 3, isoform 4, isoform 6 and isoform 8." evidence="10 16 17">
    <location>
        <begin position="264"/>
        <end position="278"/>
    </location>
</feature>
<feature type="splice variant" id="VSP_047291" description="In isoform 6 and isoform 7." evidence="10 19">
    <location>
        <begin position="425"/>
        <end position="441"/>
    </location>
</feature>
<feature type="splice variant" id="VSP_047292" description="In isoform 5, isoform 7 and isoform 8." evidence="10 19">
    <location>
        <begin position="566"/>
        <end position="578"/>
    </location>
</feature>
<feature type="splice variant" id="VSP_014140" description="In isoform 4." evidence="17">
    <original>AAARGRAALLLYSADDSGFERLVGALASALCQLPLRVAVDLWSRRE</original>
    <variation>GEWEQALGGGPPPGSQACASSPLPSPSVFSGSGRQGPRGSAPLLSR</variation>
    <location>
        <begin position="579"/>
        <end position="624"/>
    </location>
</feature>
<feature type="splice variant" id="VSP_014141" description="In isoform 4." evidence="17">
    <location>
        <begin position="625"/>
        <end position="791"/>
    </location>
</feature>
<feature type="sequence variant" id="VAR_022680" description="In dbSNP:rs708567." evidence="7 10">
    <original>S</original>
    <variation>L</variation>
    <location>
        <position position="182"/>
    </location>
</feature>
<feature type="sequence conflict" description="In Ref. 4; AAQ89199." ref="4">
    <original>E</original>
    <variation>G</variation>
    <location>
        <position position="241"/>
    </location>
</feature>
<feature type="sequence conflict" description="In Ref. 1; ABV44615/ABV44616/ABV44617, 2; BD292072, 3; AAM77569, 4; AAQ89199/AAQ89456 and 5; BAC04001." evidence="19" ref="1 2 3 4 5">
    <original>Q</original>
    <variation>R</variation>
    <location>
        <position position="378"/>
    </location>
</feature>
<feature type="strand" evidence="23">
    <location>
        <begin position="102"/>
        <end position="104"/>
    </location>
</feature>
<feature type="strand" evidence="23">
    <location>
        <begin position="106"/>
        <end position="112"/>
    </location>
</feature>
<feature type="strand" evidence="21">
    <location>
        <begin position="115"/>
        <end position="117"/>
    </location>
</feature>
<feature type="strand" evidence="23">
    <location>
        <begin position="131"/>
        <end position="144"/>
    </location>
</feature>
<feature type="strand" evidence="23">
    <location>
        <begin position="152"/>
        <end position="164"/>
    </location>
</feature>
<feature type="strand" evidence="23">
    <location>
        <begin position="194"/>
        <end position="198"/>
    </location>
</feature>
<feature type="strand" evidence="23">
    <location>
        <begin position="209"/>
        <end position="214"/>
    </location>
</feature>
<feature type="helix" evidence="21">
    <location>
        <begin position="217"/>
        <end position="219"/>
    </location>
</feature>
<feature type="strand" evidence="23">
    <location>
        <begin position="222"/>
        <end position="235"/>
    </location>
</feature>
<feature type="strand" evidence="23">
    <location>
        <begin position="241"/>
        <end position="250"/>
    </location>
</feature>
<feature type="strand" evidence="23">
    <location>
        <begin position="256"/>
        <end position="261"/>
    </location>
</feature>
<feature type="helix" evidence="23">
    <location>
        <begin position="270"/>
        <end position="273"/>
    </location>
</feature>
<feature type="helix" evidence="23">
    <location>
        <begin position="275"/>
        <end position="278"/>
    </location>
</feature>
<feature type="strand" evidence="22">
    <location>
        <begin position="283"/>
        <end position="286"/>
    </location>
</feature>
<feature type="strand" evidence="22">
    <location>
        <begin position="289"/>
        <end position="296"/>
    </location>
</feature>
<feature type="strand" evidence="22">
    <location>
        <begin position="303"/>
        <end position="312"/>
    </location>
</feature>
<feature type="strand" evidence="21">
    <location>
        <begin position="313"/>
        <end position="315"/>
    </location>
</feature>
<feature type="strand" evidence="22">
    <location>
        <begin position="321"/>
        <end position="333"/>
    </location>
</feature>
<feature type="helix" evidence="22">
    <location>
        <begin position="335"/>
        <end position="337"/>
    </location>
</feature>
<feature type="strand" evidence="22">
    <location>
        <begin position="342"/>
        <end position="350"/>
    </location>
</feature>
<feature type="strand" evidence="22">
    <location>
        <begin position="356"/>
        <end position="358"/>
    </location>
</feature>
<feature type="turn" evidence="22">
    <location>
        <begin position="360"/>
        <end position="363"/>
    </location>
</feature>
<feature type="helix" evidence="22">
    <location>
        <begin position="365"/>
        <end position="373"/>
    </location>
</feature>
<feature type="strand" evidence="22">
    <location>
        <begin position="376"/>
        <end position="381"/>
    </location>
</feature>
<feature type="strand" evidence="22">
    <location>
        <begin position="384"/>
        <end position="388"/>
    </location>
</feature>
<feature type="strand" evidence="22">
    <location>
        <begin position="395"/>
        <end position="401"/>
    </location>
</feature>
<feature type="strand" evidence="23">
    <location>
        <begin position="409"/>
        <end position="411"/>
    </location>
</feature>
<feature type="turn" evidence="22">
    <location>
        <begin position="413"/>
        <end position="415"/>
    </location>
</feature>
<feature type="strand" evidence="22">
    <location>
        <begin position="419"/>
        <end position="421"/>
    </location>
</feature>
<feature type="strand" evidence="22">
    <location>
        <begin position="425"/>
        <end position="427"/>
    </location>
</feature>
<feature type="strand" evidence="22">
    <location>
        <begin position="438"/>
        <end position="444"/>
    </location>
</feature>
<feature type="strand" evidence="22">
    <location>
        <begin position="447"/>
        <end position="452"/>
    </location>
</feature>
<feature type="turn" evidence="22">
    <location>
        <begin position="454"/>
        <end position="458"/>
    </location>
</feature>
<feature type="strand" evidence="22">
    <location>
        <begin position="465"/>
        <end position="473"/>
    </location>
</feature>
<feature type="turn" evidence="22">
    <location>
        <begin position="474"/>
        <end position="476"/>
    </location>
</feature>
<feature type="strand" evidence="22">
    <location>
        <begin position="477"/>
        <end position="479"/>
    </location>
</feature>
<feature type="strand" evidence="22">
    <location>
        <begin position="481"/>
        <end position="483"/>
    </location>
</feature>
<feature type="strand" evidence="22">
    <location>
        <begin position="485"/>
        <end position="492"/>
    </location>
</feature>
<feature type="strand" evidence="22">
    <location>
        <begin position="495"/>
        <end position="497"/>
    </location>
</feature>
<feature type="helix" evidence="22">
    <location>
        <begin position="498"/>
        <end position="501"/>
    </location>
</feature>
<feature type="helix" evidence="22">
    <location>
        <begin position="503"/>
        <end position="511"/>
    </location>
</feature>
<feature type="strand" evidence="22">
    <location>
        <begin position="515"/>
        <end position="521"/>
    </location>
</feature>
<feature type="strand" evidence="22">
    <location>
        <begin position="524"/>
        <end position="530"/>
    </location>
</feature>
<feature type="helix" evidence="22">
    <location>
        <begin position="532"/>
        <end position="534"/>
    </location>
</feature>
<name>I17RC_HUMAN</name>
<sequence length="791" mass="86240">MPVPWFLLSLALGRSPVVLSLERLVGPQDATHCSPVSLEPWGDEERLRVQFLAQQSLSLAPVTAATARTALSGLSGADGRREERGRGKSWVCLSLGGSGNTEPQKKGLSCRLWDSDILCLPGDIVPAPGPVLAPTHLQTELVLRCQKETDCDLCLRVAVHLAVHGHWEEPEDEEKFGGAADSGVEEPRNASLQAQVVLSFQAYPTARCVLLEVQVPAALVQFGQSVGSVVYDCFEAALGSEVRIWSYTQPRYEKELNHTQQLPDCRGLEVWNSIPSCWALPWLNVSADGDNVHLVLNVSEEQHFGLSLYWNQVQGPPKPRWHKNLTGPQIITLNHTDLVPCLCIQVWPLEPDSVRTNICPFREDPRAHQNLWQAARLQLLTLQSWLLDAPCSLPAEAALCWRAPGGDPCQPLVPPLSWENVTVDKVLEFPLLKGHPNLCVQVNSSEKLQLQECLWADSLGPLKDDVLLLETRGPQDNRSLCALEPSGCTSLPSKASTRAARLGEYLLQDLQSGQCLQLWDDDLGALWACPMDKYIHKRWALVWLACLLFAAALSLILLLKKDHAKGWLRLLKQDVRSGAAARGRAALLLYSADDSGFERLVGALASALCQLPLRVAVDLWSRRELSAQGPVAWFHAQRRQTLQEGGVVVLLFSPGAVALCSEWLQDGVSGPGAHGPHDAFRASLSCVLPDFLQGRAPGSYVGACFDRLLHPDAVPALFRTVPVFTLPSQLPDFLGALQQPRAPRSGRLQERAEQVSRALQPALDSYFHPPGTPAPGRGVGPGAGPGAGDGT</sequence>
<protein>
    <recommendedName>
        <fullName>Interleukin-17 receptor C</fullName>
        <shortName>IL-17 receptor C</shortName>
        <shortName>IL-17RC</shortName>
    </recommendedName>
    <alternativeName>
        <fullName>Interleukin-17 receptor homolog</fullName>
        <shortName>IL17Rhom</shortName>
    </alternativeName>
    <alternativeName>
        <fullName>Interleukin-17 receptor-like protein</fullName>
        <shortName>IL-17RL</shortName>
    </alternativeName>
    <alternativeName>
        <fullName>ZcytoR14</fullName>
    </alternativeName>
</protein>